<dbReference type="EC" id="3.4.24.-" evidence="1"/>
<dbReference type="EMBL" id="CP001389">
    <property type="protein sequence ID" value="ACP27061.1"/>
    <property type="molecule type" value="Genomic_DNA"/>
</dbReference>
<dbReference type="RefSeq" id="WP_012709808.1">
    <property type="nucleotide sequence ID" value="NC_012587.1"/>
</dbReference>
<dbReference type="RefSeq" id="YP_002827814.1">
    <property type="nucleotide sequence ID" value="NC_012587.1"/>
</dbReference>
<dbReference type="STRING" id="394.NGR_c33310"/>
<dbReference type="KEGG" id="rhi:NGR_c33310"/>
<dbReference type="PATRIC" id="fig|394.7.peg.6174"/>
<dbReference type="eggNOG" id="COG0501">
    <property type="taxonomic scope" value="Bacteria"/>
</dbReference>
<dbReference type="HOGENOM" id="CLU_042266_3_0_5"/>
<dbReference type="OrthoDB" id="15218at2"/>
<dbReference type="Proteomes" id="UP000001054">
    <property type="component" value="Chromosome"/>
</dbReference>
<dbReference type="GO" id="GO:0005886">
    <property type="term" value="C:plasma membrane"/>
    <property type="evidence" value="ECO:0007669"/>
    <property type="project" value="UniProtKB-SubCell"/>
</dbReference>
<dbReference type="GO" id="GO:0004222">
    <property type="term" value="F:metalloendopeptidase activity"/>
    <property type="evidence" value="ECO:0007669"/>
    <property type="project" value="UniProtKB-UniRule"/>
</dbReference>
<dbReference type="GO" id="GO:0008270">
    <property type="term" value="F:zinc ion binding"/>
    <property type="evidence" value="ECO:0007669"/>
    <property type="project" value="UniProtKB-UniRule"/>
</dbReference>
<dbReference type="GO" id="GO:0006508">
    <property type="term" value="P:proteolysis"/>
    <property type="evidence" value="ECO:0007669"/>
    <property type="project" value="UniProtKB-KW"/>
</dbReference>
<dbReference type="CDD" id="cd07336">
    <property type="entry name" value="M48B_HtpX_like"/>
    <property type="match status" value="1"/>
</dbReference>
<dbReference type="Gene3D" id="3.30.2010.10">
    <property type="entry name" value="Metalloproteases ('zincins'), catalytic domain"/>
    <property type="match status" value="1"/>
</dbReference>
<dbReference type="HAMAP" id="MF_00188">
    <property type="entry name" value="Pept_M48_protease_HtpX"/>
    <property type="match status" value="1"/>
</dbReference>
<dbReference type="InterPro" id="IPR050083">
    <property type="entry name" value="HtpX_protease"/>
</dbReference>
<dbReference type="InterPro" id="IPR022919">
    <property type="entry name" value="Pept_M48_protease_HtpX"/>
</dbReference>
<dbReference type="InterPro" id="IPR001915">
    <property type="entry name" value="Peptidase_M48"/>
</dbReference>
<dbReference type="NCBIfam" id="NF002363">
    <property type="entry name" value="PRK01345.1"/>
    <property type="match status" value="1"/>
</dbReference>
<dbReference type="NCBIfam" id="NF002826">
    <property type="entry name" value="PRK03001.1"/>
    <property type="match status" value="1"/>
</dbReference>
<dbReference type="PANTHER" id="PTHR43221">
    <property type="entry name" value="PROTEASE HTPX"/>
    <property type="match status" value="1"/>
</dbReference>
<dbReference type="PANTHER" id="PTHR43221:SF1">
    <property type="entry name" value="PROTEASE HTPX"/>
    <property type="match status" value="1"/>
</dbReference>
<dbReference type="Pfam" id="PF01435">
    <property type="entry name" value="Peptidase_M48"/>
    <property type="match status" value="1"/>
</dbReference>
<dbReference type="PROSITE" id="PS00142">
    <property type="entry name" value="ZINC_PROTEASE"/>
    <property type="match status" value="1"/>
</dbReference>
<accession>C3MAR8</accession>
<organism>
    <name type="scientific">Sinorhizobium fredii (strain NBRC 101917 / NGR234)</name>
    <dbReference type="NCBI Taxonomy" id="394"/>
    <lineage>
        <taxon>Bacteria</taxon>
        <taxon>Pseudomonadati</taxon>
        <taxon>Pseudomonadota</taxon>
        <taxon>Alphaproteobacteria</taxon>
        <taxon>Hyphomicrobiales</taxon>
        <taxon>Rhizobiaceae</taxon>
        <taxon>Sinorhizobium/Ensifer group</taxon>
        <taxon>Sinorhizobium</taxon>
    </lineage>
</organism>
<feature type="chain" id="PRO_1000124235" description="Protease HtpX homolog">
    <location>
        <begin position="1"/>
        <end position="319"/>
    </location>
</feature>
<feature type="transmembrane region" description="Helical" evidence="1">
    <location>
        <begin position="6"/>
        <end position="26"/>
    </location>
</feature>
<feature type="transmembrane region" description="Helical" evidence="1">
    <location>
        <begin position="28"/>
        <end position="48"/>
    </location>
</feature>
<feature type="transmembrane region" description="Helical" evidence="1">
    <location>
        <begin position="145"/>
        <end position="165"/>
    </location>
</feature>
<feature type="transmembrane region" description="Helical" evidence="1">
    <location>
        <begin position="172"/>
        <end position="192"/>
    </location>
</feature>
<feature type="region of interest" description="Disordered" evidence="2">
    <location>
        <begin position="279"/>
        <end position="319"/>
    </location>
</feature>
<feature type="active site" evidence="1">
    <location>
        <position position="131"/>
    </location>
</feature>
<feature type="binding site" evidence="1">
    <location>
        <position position="130"/>
    </location>
    <ligand>
        <name>Zn(2+)</name>
        <dbReference type="ChEBI" id="CHEBI:29105"/>
        <note>catalytic</note>
    </ligand>
</feature>
<feature type="binding site" evidence="1">
    <location>
        <position position="134"/>
    </location>
    <ligand>
        <name>Zn(2+)</name>
        <dbReference type="ChEBI" id="CHEBI:29105"/>
        <note>catalytic</note>
    </ligand>
</feature>
<feature type="binding site" evidence="1">
    <location>
        <position position="201"/>
    </location>
    <ligand>
        <name>Zn(2+)</name>
        <dbReference type="ChEBI" id="CHEBI:29105"/>
        <note>catalytic</note>
    </ligand>
</feature>
<evidence type="ECO:0000255" key="1">
    <source>
        <dbReference type="HAMAP-Rule" id="MF_00188"/>
    </source>
</evidence>
<evidence type="ECO:0000256" key="2">
    <source>
        <dbReference type="SAM" id="MobiDB-lite"/>
    </source>
</evidence>
<sequence>MNLVRTAMLLAFMTALFMAVGYVIGGRGGMMIALLMAAGMNFFSYWNSDRMVLRMYRAQEVDERDAPEYYGIVRDLATNAGLPMPRVYVIDSPQPNAFATGRNPQNAAVAASTGLLQSLSYEEVAGVMAHELAHIQYRDTLTMTLTATLAGAISMLGNFAFFFGGNRDNNNPLGFVGVLIAMIVAPFAAMLVQMAISRTREYSADRRGAEICGNPLSLASALRKIAGAAHAIPNYDAERNPATAHMFIINPLSGERMDNLFSTHPNTENRVAALERMAREMSAGSTAPARPDNAVRRSRSVPKTGWGRGGSEPPKGPWS</sequence>
<name>HTPX_SINFN</name>
<gene>
    <name evidence="1" type="primary">htpX</name>
    <name type="ordered locus">NGR_c33310</name>
</gene>
<proteinExistence type="inferred from homology"/>
<keyword id="KW-0997">Cell inner membrane</keyword>
<keyword id="KW-1003">Cell membrane</keyword>
<keyword id="KW-0378">Hydrolase</keyword>
<keyword id="KW-0472">Membrane</keyword>
<keyword id="KW-0479">Metal-binding</keyword>
<keyword id="KW-0482">Metalloprotease</keyword>
<keyword id="KW-0645">Protease</keyword>
<keyword id="KW-1185">Reference proteome</keyword>
<keyword id="KW-0812">Transmembrane</keyword>
<keyword id="KW-1133">Transmembrane helix</keyword>
<keyword id="KW-0862">Zinc</keyword>
<comment type="cofactor">
    <cofactor evidence="1">
        <name>Zn(2+)</name>
        <dbReference type="ChEBI" id="CHEBI:29105"/>
    </cofactor>
    <text evidence="1">Binds 1 zinc ion per subunit.</text>
</comment>
<comment type="subcellular location">
    <subcellularLocation>
        <location evidence="1">Cell inner membrane</location>
        <topology evidence="1">Multi-pass membrane protein</topology>
    </subcellularLocation>
</comment>
<comment type="similarity">
    <text evidence="1">Belongs to the peptidase M48B family.</text>
</comment>
<protein>
    <recommendedName>
        <fullName evidence="1">Protease HtpX homolog</fullName>
        <ecNumber evidence="1">3.4.24.-</ecNumber>
    </recommendedName>
</protein>
<reference key="1">
    <citation type="journal article" date="2009" name="Appl. Environ. Microbiol.">
        <title>Rhizobium sp. strain NGR234 possesses a remarkable number of secretion systems.</title>
        <authorList>
            <person name="Schmeisser C."/>
            <person name="Liesegang H."/>
            <person name="Krysciak D."/>
            <person name="Bakkou N."/>
            <person name="Le Quere A."/>
            <person name="Wollherr A."/>
            <person name="Heinemeyer I."/>
            <person name="Morgenstern B."/>
            <person name="Pommerening-Roeser A."/>
            <person name="Flores M."/>
            <person name="Palacios R."/>
            <person name="Brenner S."/>
            <person name="Gottschalk G."/>
            <person name="Schmitz R.A."/>
            <person name="Broughton W.J."/>
            <person name="Perret X."/>
            <person name="Strittmatter A.W."/>
            <person name="Streit W.R."/>
        </authorList>
    </citation>
    <scope>NUCLEOTIDE SEQUENCE [LARGE SCALE GENOMIC DNA]</scope>
    <source>
        <strain>NBRC 101917 / NGR234</strain>
    </source>
</reference>